<reference key="1">
    <citation type="submission" date="2007-06" db="EMBL/GenBank/DDBJ databases">
        <title>Complete sequence of chromosome of Staphylococcus aureus subsp. aureus JH1.</title>
        <authorList>
            <consortium name="US DOE Joint Genome Institute"/>
            <person name="Copeland A."/>
            <person name="Lucas S."/>
            <person name="Lapidus A."/>
            <person name="Barry K."/>
            <person name="Detter J.C."/>
            <person name="Glavina del Rio T."/>
            <person name="Hammon N."/>
            <person name="Israni S."/>
            <person name="Dalin E."/>
            <person name="Tice H."/>
            <person name="Pitluck S."/>
            <person name="Chain P."/>
            <person name="Malfatti S."/>
            <person name="Shin M."/>
            <person name="Vergez L."/>
            <person name="Schmutz J."/>
            <person name="Larimer F."/>
            <person name="Land M."/>
            <person name="Hauser L."/>
            <person name="Kyrpides N."/>
            <person name="Ivanova N."/>
            <person name="Tomasz A."/>
            <person name="Richardson P."/>
        </authorList>
    </citation>
    <scope>NUCLEOTIDE SEQUENCE [LARGE SCALE GENOMIC DNA]</scope>
    <source>
        <strain>JH1</strain>
    </source>
</reference>
<organism>
    <name type="scientific">Staphylococcus aureus (strain JH1)</name>
    <dbReference type="NCBI Taxonomy" id="359787"/>
    <lineage>
        <taxon>Bacteria</taxon>
        <taxon>Bacillati</taxon>
        <taxon>Bacillota</taxon>
        <taxon>Bacilli</taxon>
        <taxon>Bacillales</taxon>
        <taxon>Staphylococcaceae</taxon>
        <taxon>Staphylococcus</taxon>
    </lineage>
</organism>
<gene>
    <name type="ordered locus">SaurJH1_1707</name>
</gene>
<feature type="chain" id="PRO_1000082755" description="Putative pre-16S rRNA nuclease">
    <location>
        <begin position="1"/>
        <end position="142"/>
    </location>
</feature>
<accession>A6U285</accession>
<sequence length="142" mass="15865">MLQHKILGLDVGSRTVGIAISDIMGWTAQGLDTLRINEENNELGIDQLVDIIKKHNVGTVVIGLPKNMNNSIGFRGEASLTYKEKLLEAYPSIEIVMWDERLSTMAAERSLLEADVSRQKRKQVIDKMAAVFILQGYLDSLH</sequence>
<proteinExistence type="inferred from homology"/>
<keyword id="KW-0963">Cytoplasm</keyword>
<keyword id="KW-0378">Hydrolase</keyword>
<keyword id="KW-0540">Nuclease</keyword>
<keyword id="KW-0690">Ribosome biogenesis</keyword>
<protein>
    <recommendedName>
        <fullName evidence="1">Putative pre-16S rRNA nuclease</fullName>
        <ecNumber evidence="1">3.1.-.-</ecNumber>
    </recommendedName>
</protein>
<comment type="function">
    <text evidence="1">Could be a nuclease involved in processing of the 5'-end of pre-16S rRNA.</text>
</comment>
<comment type="subcellular location">
    <subcellularLocation>
        <location evidence="1">Cytoplasm</location>
    </subcellularLocation>
</comment>
<comment type="similarity">
    <text evidence="1">Belongs to the YqgF nuclease family.</text>
</comment>
<dbReference type="EC" id="3.1.-.-" evidence="1"/>
<dbReference type="EMBL" id="CP000736">
    <property type="protein sequence ID" value="ABR52553.1"/>
    <property type="molecule type" value="Genomic_DNA"/>
</dbReference>
<dbReference type="SMR" id="A6U285"/>
<dbReference type="KEGG" id="sah:SaurJH1_1707"/>
<dbReference type="HOGENOM" id="CLU_098240_2_0_9"/>
<dbReference type="GO" id="GO:0005829">
    <property type="term" value="C:cytosol"/>
    <property type="evidence" value="ECO:0007669"/>
    <property type="project" value="TreeGrafter"/>
</dbReference>
<dbReference type="GO" id="GO:0004518">
    <property type="term" value="F:nuclease activity"/>
    <property type="evidence" value="ECO:0007669"/>
    <property type="project" value="UniProtKB-KW"/>
</dbReference>
<dbReference type="GO" id="GO:0000967">
    <property type="term" value="P:rRNA 5'-end processing"/>
    <property type="evidence" value="ECO:0007669"/>
    <property type="project" value="UniProtKB-UniRule"/>
</dbReference>
<dbReference type="CDD" id="cd16964">
    <property type="entry name" value="YqgF"/>
    <property type="match status" value="1"/>
</dbReference>
<dbReference type="FunFam" id="3.30.420.140:FF:000003">
    <property type="entry name" value="Putative pre-16S rRNA nuclease"/>
    <property type="match status" value="1"/>
</dbReference>
<dbReference type="Gene3D" id="3.30.420.140">
    <property type="entry name" value="YqgF/RNase H-like domain"/>
    <property type="match status" value="1"/>
</dbReference>
<dbReference type="HAMAP" id="MF_00651">
    <property type="entry name" value="Nuclease_YqgF"/>
    <property type="match status" value="1"/>
</dbReference>
<dbReference type="InterPro" id="IPR012337">
    <property type="entry name" value="RNaseH-like_sf"/>
</dbReference>
<dbReference type="InterPro" id="IPR005227">
    <property type="entry name" value="YqgF"/>
</dbReference>
<dbReference type="InterPro" id="IPR006641">
    <property type="entry name" value="YqgF/RNaseH-like_dom"/>
</dbReference>
<dbReference type="InterPro" id="IPR037027">
    <property type="entry name" value="YqgF/RNaseH-like_dom_sf"/>
</dbReference>
<dbReference type="NCBIfam" id="TIGR00250">
    <property type="entry name" value="RNAse_H_YqgF"/>
    <property type="match status" value="1"/>
</dbReference>
<dbReference type="PANTHER" id="PTHR33317">
    <property type="entry name" value="POLYNUCLEOTIDYL TRANSFERASE, RIBONUCLEASE H-LIKE SUPERFAMILY PROTEIN"/>
    <property type="match status" value="1"/>
</dbReference>
<dbReference type="PANTHER" id="PTHR33317:SF4">
    <property type="entry name" value="POLYNUCLEOTIDYL TRANSFERASE, RIBONUCLEASE H-LIKE SUPERFAMILY PROTEIN"/>
    <property type="match status" value="1"/>
</dbReference>
<dbReference type="Pfam" id="PF03652">
    <property type="entry name" value="RuvX"/>
    <property type="match status" value="1"/>
</dbReference>
<dbReference type="SMART" id="SM00732">
    <property type="entry name" value="YqgFc"/>
    <property type="match status" value="1"/>
</dbReference>
<dbReference type="SUPFAM" id="SSF53098">
    <property type="entry name" value="Ribonuclease H-like"/>
    <property type="match status" value="1"/>
</dbReference>
<evidence type="ECO:0000255" key="1">
    <source>
        <dbReference type="HAMAP-Rule" id="MF_00651"/>
    </source>
</evidence>
<name>YQGF_STAA2</name>